<feature type="propeptide" id="PRO_0000026633" description="Removed in mature form" evidence="1">
    <location>
        <begin position="1"/>
        <end position="18"/>
    </location>
</feature>
<feature type="chain" id="PRO_0000026634" description="Proteasome subunit beta type-9">
    <location>
        <begin position="19"/>
        <end position="217"/>
    </location>
</feature>
<feature type="active site" description="Nucleophile" evidence="1">
    <location>
        <position position="19"/>
    </location>
</feature>
<feature type="site" description="Cleavage; by autolysis" evidence="2">
    <location>
        <begin position="18"/>
        <end position="19"/>
    </location>
</feature>
<feature type="sequence variant" description="In strain: HD-RR.">
    <location>
        <position position="5"/>
    </location>
</feature>
<accession>Q8UW64</accession>
<accession>Q8UWC6</accession>
<reference key="1">
    <citation type="journal article" date="2002" name="Immunogenetics">
        <title>Nucleotide sequence of the MHC class I genomic region of a teleost, the medaka (Oryzias latipes).</title>
        <authorList>
            <person name="Matsuo M.Y."/>
            <person name="Asakawa S."/>
            <person name="Shimizu N."/>
            <person name="Kimura H."/>
            <person name="Nonaka M."/>
        </authorList>
    </citation>
    <scope>NUCLEOTIDE SEQUENCE [GENOMIC DNA]</scope>
    <source>
        <strain>Hd-rR</strain>
        <strain>HNI</strain>
    </source>
</reference>
<comment type="function">
    <text evidence="1">The proteasome is a multicatalytic proteinase complex which is characterized by its ability to cleave peptides with Arg, Phe, Tyr, Leu, and Glu adjacent to the leaving group at neutral or slightly basic pH. The proteasome has an ATP-dependent proteolytic activity. This subunit is involved in antigen processing to generate class I binding peptides (By similarity).</text>
</comment>
<comment type="catalytic activity">
    <reaction>
        <text>Cleavage of peptide bonds with very broad specificity.</text>
        <dbReference type="EC" id="3.4.25.1"/>
    </reaction>
</comment>
<comment type="subunit">
    <text evidence="1">The 26S proteasome consists of a 20S proteasome core and two 19S regulatory subunits. The 20S proteasome core is composed of 28 subunits that are arranged in four stacked rings, resulting in a barrel-shaped structure. The two end rings are each formed by seven alpha subunits, and the two central rings are each formed by seven beta subunits. The catalytic chamber with the active sites is on the inside of the barrel. Component of the immunoproteasome, where it displaces the equivalent housekeeping subunit PSMB6 (By similarity).</text>
</comment>
<comment type="subcellular location">
    <subcellularLocation>
        <location evidence="3">Cytoplasm</location>
    </subcellularLocation>
    <subcellularLocation>
        <location evidence="1">Nucleus</location>
    </subcellularLocation>
</comment>
<comment type="PTM">
    <text evidence="2">Autocleaved. The resulting N-terminal Thr residue of the mature subunit is responsible for the nucleophile proteolytic activity.</text>
</comment>
<comment type="similarity">
    <text evidence="3">Belongs to the peptidase T1B family.</text>
</comment>
<evidence type="ECO:0000250" key="1"/>
<evidence type="ECO:0000250" key="2">
    <source>
        <dbReference type="UniProtKB" id="O35955"/>
    </source>
</evidence>
<evidence type="ECO:0000255" key="3">
    <source>
        <dbReference type="PROSITE-ProRule" id="PRU00809"/>
    </source>
</evidence>
<proteinExistence type="inferred from homology"/>
<keyword id="KW-0963">Cytoplasm</keyword>
<keyword id="KW-0378">Hydrolase</keyword>
<keyword id="KW-0391">Immunity</keyword>
<keyword id="KW-0539">Nucleus</keyword>
<keyword id="KW-0645">Protease</keyword>
<keyword id="KW-0647">Proteasome</keyword>
<keyword id="KW-1185">Reference proteome</keyword>
<keyword id="KW-0888">Threonine protease</keyword>
<keyword id="KW-0865">Zymogen</keyword>
<gene>
    <name type="primary">psmb9</name>
    <name type="synonym">lmp2</name>
</gene>
<protein>
    <recommendedName>
        <fullName>Proteasome subunit beta type-9</fullName>
        <ecNumber>3.4.25.1</ecNumber>
    </recommendedName>
    <alternativeName>
        <fullName>Low molecular mass protein 2</fullName>
    </alternativeName>
</protein>
<name>PSB9_ORYLA</name>
<organism>
    <name type="scientific">Oryzias latipes</name>
    <name type="common">Japanese rice fish</name>
    <name type="synonym">Japanese killifish</name>
    <dbReference type="NCBI Taxonomy" id="8090"/>
    <lineage>
        <taxon>Eukaryota</taxon>
        <taxon>Metazoa</taxon>
        <taxon>Chordata</taxon>
        <taxon>Craniata</taxon>
        <taxon>Vertebrata</taxon>
        <taxon>Euteleostomi</taxon>
        <taxon>Actinopterygii</taxon>
        <taxon>Neopterygii</taxon>
        <taxon>Teleostei</taxon>
        <taxon>Neoteleostei</taxon>
        <taxon>Acanthomorphata</taxon>
        <taxon>Ovalentaria</taxon>
        <taxon>Atherinomorphae</taxon>
        <taxon>Beloniformes</taxon>
        <taxon>Adrianichthyidae</taxon>
        <taxon>Oryziinae</taxon>
        <taxon>Oryzias</taxon>
    </lineage>
</organism>
<sequence length="217" mass="23547">MLGEEAEPQWISEEVKTGTTIIAIEFNGGVVLGSDSRVSAGDSVVNRVMNKLSPLHDKIYCALSGSAADAQTIAEMVNYQLDVHSLEIDEDPQVRSAATLVKNISYKYKEELSAHLIVAGWDRRDGGQVFATLGGLLTRQPFAIGGSGSSYVYGFVDAEYRRGMTKEECQKFVVNTLALAMNRDGSSGGVAYIVTIDEHSTDEKVILGNDLPTFFDQ</sequence>
<dbReference type="EC" id="3.4.25.1"/>
<dbReference type="EMBL" id="BA000027">
    <property type="protein sequence ID" value="BAB83845.1"/>
    <property type="molecule type" value="Genomic_DNA"/>
</dbReference>
<dbReference type="EMBL" id="AB073378">
    <property type="protein sequence ID" value="BAB84548.1"/>
    <property type="molecule type" value="Genomic_DNA"/>
</dbReference>
<dbReference type="RefSeq" id="NP_001265756.1">
    <property type="nucleotide sequence ID" value="NM_001278827.1"/>
</dbReference>
<dbReference type="SMR" id="Q8UW64"/>
<dbReference type="FunCoup" id="Q8UW64">
    <property type="interactions" value="265"/>
</dbReference>
<dbReference type="STRING" id="8090.ENSORLP00000008342"/>
<dbReference type="MEROPS" id="T01.013"/>
<dbReference type="GeneID" id="100049434"/>
<dbReference type="KEGG" id="ola:100049434"/>
<dbReference type="CTD" id="30665"/>
<dbReference type="eggNOG" id="KOG0174">
    <property type="taxonomic scope" value="Eukaryota"/>
</dbReference>
<dbReference type="InParanoid" id="Q8UW64"/>
<dbReference type="OrthoDB" id="7854943at2759"/>
<dbReference type="Proteomes" id="UP000001038">
    <property type="component" value="Unplaced"/>
</dbReference>
<dbReference type="Proteomes" id="UP000265180">
    <property type="component" value="Chromosome 9"/>
</dbReference>
<dbReference type="Proteomes" id="UP000265200">
    <property type="component" value="Chromosome 9"/>
</dbReference>
<dbReference type="GO" id="GO:0005829">
    <property type="term" value="C:cytosol"/>
    <property type="evidence" value="ECO:0000318"/>
    <property type="project" value="GO_Central"/>
</dbReference>
<dbReference type="GO" id="GO:0005634">
    <property type="term" value="C:nucleus"/>
    <property type="evidence" value="ECO:0000318"/>
    <property type="project" value="GO_Central"/>
</dbReference>
<dbReference type="GO" id="GO:0019774">
    <property type="term" value="C:proteasome core complex, beta-subunit complex"/>
    <property type="evidence" value="ECO:0000250"/>
    <property type="project" value="UniProtKB"/>
</dbReference>
<dbReference type="GO" id="GO:0004175">
    <property type="term" value="F:endopeptidase activity"/>
    <property type="evidence" value="ECO:0000318"/>
    <property type="project" value="GO_Central"/>
</dbReference>
<dbReference type="GO" id="GO:0004298">
    <property type="term" value="F:threonine-type endopeptidase activity"/>
    <property type="evidence" value="ECO:0007669"/>
    <property type="project" value="UniProtKB-KW"/>
</dbReference>
<dbReference type="GO" id="GO:0002376">
    <property type="term" value="P:immune system process"/>
    <property type="evidence" value="ECO:0007669"/>
    <property type="project" value="UniProtKB-KW"/>
</dbReference>
<dbReference type="GO" id="GO:0043161">
    <property type="term" value="P:proteasome-mediated ubiquitin-dependent protein catabolic process"/>
    <property type="evidence" value="ECO:0000318"/>
    <property type="project" value="GO_Central"/>
</dbReference>
<dbReference type="CDD" id="cd03762">
    <property type="entry name" value="proteasome_beta_type_6"/>
    <property type="match status" value="1"/>
</dbReference>
<dbReference type="FunFam" id="3.60.20.10:FF:000010">
    <property type="entry name" value="Proteasome subunit beta type-1"/>
    <property type="match status" value="1"/>
</dbReference>
<dbReference type="Gene3D" id="3.60.20.10">
    <property type="entry name" value="Glutamine Phosphoribosylpyrophosphate, subunit 1, domain 1"/>
    <property type="match status" value="1"/>
</dbReference>
<dbReference type="InterPro" id="IPR029055">
    <property type="entry name" value="Ntn_hydrolases_N"/>
</dbReference>
<dbReference type="InterPro" id="IPR000243">
    <property type="entry name" value="Pept_T1A_subB"/>
</dbReference>
<dbReference type="InterPro" id="IPR016050">
    <property type="entry name" value="Proteasome_bsu_CS"/>
</dbReference>
<dbReference type="InterPro" id="IPR001353">
    <property type="entry name" value="Proteasome_sua/b"/>
</dbReference>
<dbReference type="InterPro" id="IPR023333">
    <property type="entry name" value="Proteasome_suB-type"/>
</dbReference>
<dbReference type="PANTHER" id="PTHR32194">
    <property type="entry name" value="METALLOPROTEASE TLDD"/>
    <property type="match status" value="1"/>
</dbReference>
<dbReference type="PANTHER" id="PTHR32194:SF12">
    <property type="entry name" value="PROTEASOME SUBUNIT BETA"/>
    <property type="match status" value="1"/>
</dbReference>
<dbReference type="Pfam" id="PF00227">
    <property type="entry name" value="Proteasome"/>
    <property type="match status" value="1"/>
</dbReference>
<dbReference type="PRINTS" id="PR00141">
    <property type="entry name" value="PROTEASOME"/>
</dbReference>
<dbReference type="SUPFAM" id="SSF56235">
    <property type="entry name" value="N-terminal nucleophile aminohydrolases (Ntn hydrolases)"/>
    <property type="match status" value="1"/>
</dbReference>
<dbReference type="PROSITE" id="PS00854">
    <property type="entry name" value="PROTEASOME_BETA_1"/>
    <property type="match status" value="1"/>
</dbReference>
<dbReference type="PROSITE" id="PS51476">
    <property type="entry name" value="PROTEASOME_BETA_2"/>
    <property type="match status" value="1"/>
</dbReference>